<dbReference type="EMBL" id="CP001612">
    <property type="protein sequence ID" value="ACP53043.1"/>
    <property type="molecule type" value="Genomic_DNA"/>
</dbReference>
<dbReference type="RefSeq" id="WP_012719344.1">
    <property type="nucleotide sequence ID" value="NC_012633.1"/>
</dbReference>
<dbReference type="SMR" id="C3PM83"/>
<dbReference type="KEGG" id="raf:RAF_ORF0068"/>
<dbReference type="HOGENOM" id="CLU_016535_1_0_5"/>
<dbReference type="Proteomes" id="UP000002305">
    <property type="component" value="Chromosome"/>
</dbReference>
<dbReference type="GO" id="GO:0005886">
    <property type="term" value="C:plasma membrane"/>
    <property type="evidence" value="ECO:0007669"/>
    <property type="project" value="UniProtKB-SubCell"/>
</dbReference>
<dbReference type="GO" id="GO:0032977">
    <property type="term" value="F:membrane insertase activity"/>
    <property type="evidence" value="ECO:0007669"/>
    <property type="project" value="InterPro"/>
</dbReference>
<dbReference type="GO" id="GO:0051205">
    <property type="term" value="P:protein insertion into membrane"/>
    <property type="evidence" value="ECO:0007669"/>
    <property type="project" value="TreeGrafter"/>
</dbReference>
<dbReference type="GO" id="GO:0015031">
    <property type="term" value="P:protein transport"/>
    <property type="evidence" value="ECO:0007669"/>
    <property type="project" value="UniProtKB-KW"/>
</dbReference>
<dbReference type="CDD" id="cd20070">
    <property type="entry name" value="5TM_YidC_Alb3"/>
    <property type="match status" value="1"/>
</dbReference>
<dbReference type="CDD" id="cd19961">
    <property type="entry name" value="EcYidC-like_peri"/>
    <property type="match status" value="1"/>
</dbReference>
<dbReference type="Gene3D" id="2.70.98.90">
    <property type="match status" value="1"/>
</dbReference>
<dbReference type="HAMAP" id="MF_01810">
    <property type="entry name" value="YidC_type1"/>
    <property type="match status" value="1"/>
</dbReference>
<dbReference type="InterPro" id="IPR019998">
    <property type="entry name" value="Membr_insert_YidC"/>
</dbReference>
<dbReference type="InterPro" id="IPR028053">
    <property type="entry name" value="Membr_insert_YidC_N"/>
</dbReference>
<dbReference type="InterPro" id="IPR001708">
    <property type="entry name" value="YidC/ALB3/OXA1/COX18"/>
</dbReference>
<dbReference type="InterPro" id="IPR028055">
    <property type="entry name" value="YidC/Oxa/ALB_C"/>
</dbReference>
<dbReference type="InterPro" id="IPR047196">
    <property type="entry name" value="YidC_ALB_C"/>
</dbReference>
<dbReference type="InterPro" id="IPR038221">
    <property type="entry name" value="YidC_periplasmic_sf"/>
</dbReference>
<dbReference type="NCBIfam" id="NF002353">
    <property type="entry name" value="PRK01318.1-4"/>
    <property type="match status" value="1"/>
</dbReference>
<dbReference type="NCBIfam" id="TIGR03593">
    <property type="entry name" value="yidC_nterm"/>
    <property type="match status" value="1"/>
</dbReference>
<dbReference type="NCBIfam" id="TIGR03592">
    <property type="entry name" value="yidC_oxa1_cterm"/>
    <property type="match status" value="1"/>
</dbReference>
<dbReference type="PANTHER" id="PTHR12428:SF65">
    <property type="entry name" value="CYTOCHROME C OXIDASE ASSEMBLY PROTEIN COX18, MITOCHONDRIAL"/>
    <property type="match status" value="1"/>
</dbReference>
<dbReference type="PANTHER" id="PTHR12428">
    <property type="entry name" value="OXA1"/>
    <property type="match status" value="1"/>
</dbReference>
<dbReference type="Pfam" id="PF02096">
    <property type="entry name" value="60KD_IMP"/>
    <property type="match status" value="1"/>
</dbReference>
<dbReference type="Pfam" id="PF14849">
    <property type="entry name" value="YidC_periplas"/>
    <property type="match status" value="1"/>
</dbReference>
<dbReference type="PRINTS" id="PR00701">
    <property type="entry name" value="60KDINNERMP"/>
</dbReference>
<dbReference type="PRINTS" id="PR01900">
    <property type="entry name" value="YIDCPROTEIN"/>
</dbReference>
<protein>
    <recommendedName>
        <fullName evidence="1">Membrane protein insertase YidC</fullName>
    </recommendedName>
    <alternativeName>
        <fullName evidence="1">Foldase YidC</fullName>
    </alternativeName>
    <alternativeName>
        <fullName evidence="1">Membrane integrase YidC</fullName>
    </alternativeName>
    <alternativeName>
        <fullName evidence="1">Membrane protein YidC</fullName>
    </alternativeName>
</protein>
<feature type="chain" id="PRO_1000215976" description="Membrane protein insertase YidC">
    <location>
        <begin position="1"/>
        <end position="560"/>
    </location>
</feature>
<feature type="transmembrane region" description="Helical" evidence="1">
    <location>
        <begin position="5"/>
        <end position="25"/>
    </location>
</feature>
<feature type="transmembrane region" description="Helical" evidence="1">
    <location>
        <begin position="334"/>
        <end position="354"/>
    </location>
</feature>
<feature type="transmembrane region" description="Helical" evidence="1">
    <location>
        <begin position="357"/>
        <end position="377"/>
    </location>
</feature>
<feature type="transmembrane region" description="Helical" evidence="1">
    <location>
        <begin position="431"/>
        <end position="451"/>
    </location>
</feature>
<feature type="transmembrane region" description="Helical" evidence="1">
    <location>
        <begin position="476"/>
        <end position="496"/>
    </location>
</feature>
<feature type="transmembrane region" description="Helical" evidence="1">
    <location>
        <begin position="522"/>
        <end position="542"/>
    </location>
</feature>
<proteinExistence type="inferred from homology"/>
<organism>
    <name type="scientific">Rickettsia africae (strain ESF-5)</name>
    <dbReference type="NCBI Taxonomy" id="347255"/>
    <lineage>
        <taxon>Bacteria</taxon>
        <taxon>Pseudomonadati</taxon>
        <taxon>Pseudomonadota</taxon>
        <taxon>Alphaproteobacteria</taxon>
        <taxon>Rickettsiales</taxon>
        <taxon>Rickettsiaceae</taxon>
        <taxon>Rickettsieae</taxon>
        <taxon>Rickettsia</taxon>
        <taxon>spotted fever group</taxon>
    </lineage>
</organism>
<reference key="1">
    <citation type="journal article" date="2009" name="BMC Genomics">
        <title>Analysis of the Rickettsia africae genome reveals that virulence acquisition in Rickettsia species may be explained by genome reduction.</title>
        <authorList>
            <person name="Fournier P.-E."/>
            <person name="El Karkouri K."/>
            <person name="Leroy Q."/>
            <person name="Robert C."/>
            <person name="Giumelli B."/>
            <person name="Renesto P."/>
            <person name="Socolovschi C."/>
            <person name="Parola P."/>
            <person name="Audic S."/>
            <person name="Raoult D."/>
        </authorList>
    </citation>
    <scope>NUCLEOTIDE SEQUENCE [LARGE SCALE GENOMIC DNA]</scope>
    <source>
        <strain>ESF-5</strain>
    </source>
</reference>
<comment type="function">
    <text evidence="1">Required for the insertion and/or proper folding and/or complex formation of integral membrane proteins into the membrane. Involved in integration of membrane proteins that insert both dependently and independently of the Sec translocase complex, as well as at least some lipoproteins. Aids folding of multispanning membrane proteins.</text>
</comment>
<comment type="subunit">
    <text evidence="1">Interacts with the Sec translocase complex via SecD. Specifically interacts with transmembrane segments of nascent integral membrane proteins during membrane integration.</text>
</comment>
<comment type="subcellular location">
    <subcellularLocation>
        <location evidence="1">Cell inner membrane</location>
        <topology evidence="1">Multi-pass membrane protein</topology>
    </subcellularLocation>
</comment>
<comment type="similarity">
    <text evidence="1">Belongs to the OXA1/ALB3/YidC family. Type 1 subfamily.</text>
</comment>
<name>YIDC_RICAE</name>
<sequence length="560" mass="64485">MNNNIINLIAAIILSLSIIFGWQYFVVKPEQKKQQQQIAVQKAENLKKQQLKAVVEPATGIVVQEESQVQRIKIESESLTGSISLKGLRFDDLILKKYKQDLSKNSPEVRLFSPANTENAYFAEVGLVSNLSSVKLPNNDTIWNSDSEILSPEKPVHLFWVNEDGVKFLVTITVDENYLFTIEQTIVNNSDKELPVQSYGLINRKYIAVEKAVNILHQGPIGCIDENLKEYSYDDIKDKKSEKFVASKVDWIGITDKYWLSSLIPDKSSNYSSNFNYALKQGTERYQVDFISPVQIIKPGEDFSIKSRIFAGAKKVDLLDKYEKQYDIKLFDRAIDFGWFYIITKPVFYAMNFFYGYVGNFGVSILIVTVIIKLLMFTLANKSYRSMKKMKNLQPEIDRIKNLYSDDKARLNQEIMALYKKEKVNPVAGCLPILVQIPVFFSIYKVLYVTIEMRQAPFYGWIKDLSASDPTTIFNLFGLLPFSPPLFLMIGAWPILMAITMFLQQKMSPEPADPMQAQVMKFMPLIFLFMFSSFPVGLLIYWSWNNILSIIQQYYINKFN</sequence>
<accession>C3PM83</accession>
<evidence type="ECO:0000255" key="1">
    <source>
        <dbReference type="HAMAP-Rule" id="MF_01810"/>
    </source>
</evidence>
<gene>
    <name evidence="1" type="primary">yidC</name>
    <name type="ordered locus">RAF_ORF0068</name>
</gene>
<keyword id="KW-0997">Cell inner membrane</keyword>
<keyword id="KW-1003">Cell membrane</keyword>
<keyword id="KW-0143">Chaperone</keyword>
<keyword id="KW-0472">Membrane</keyword>
<keyword id="KW-0653">Protein transport</keyword>
<keyword id="KW-0812">Transmembrane</keyword>
<keyword id="KW-1133">Transmembrane helix</keyword>
<keyword id="KW-0813">Transport</keyword>